<accession>C0HMB9</accession>
<evidence type="ECO:0000250" key="1">
    <source>
        <dbReference type="UniProtKB" id="C0HLR3"/>
    </source>
</evidence>
<evidence type="ECO:0000255" key="2">
    <source>
        <dbReference type="PROSITE-ProRule" id="PRU01210"/>
    </source>
</evidence>
<evidence type="ECO:0000269" key="3">
    <source>
    </source>
</evidence>
<evidence type="ECO:0000303" key="4">
    <source>
    </source>
</evidence>
<evidence type="ECO:0000305" key="5"/>
<evidence type="ECO:0000305" key="6">
    <source>
    </source>
</evidence>
<organism>
    <name type="scientific">Centruroides villegasi</name>
    <name type="common">Scorpion</name>
    <dbReference type="NCBI Taxonomy" id="3161195"/>
    <lineage>
        <taxon>Eukaryota</taxon>
        <taxon>Metazoa</taxon>
        <taxon>Ecdysozoa</taxon>
        <taxon>Arthropoda</taxon>
        <taxon>Chelicerata</taxon>
        <taxon>Arachnida</taxon>
        <taxon>Scorpiones</taxon>
        <taxon>Buthida</taxon>
        <taxon>Buthoidea</taxon>
        <taxon>Buthidae</taxon>
        <taxon>Centruroides</taxon>
    </lineage>
</organism>
<feature type="chain" id="PRO_0000461634" description="Beta-mammal toxin Cv2" evidence="3">
    <location>
        <begin position="1"/>
        <end position="66"/>
    </location>
</feature>
<feature type="domain" description="LCN-type CS-alpha/beta" evidence="2">
    <location>
        <begin position="1"/>
        <end position="66"/>
    </location>
</feature>
<feature type="disulfide bond" evidence="2">
    <location>
        <begin position="12"/>
        <end position="65"/>
    </location>
</feature>
<feature type="disulfide bond" evidence="2">
    <location>
        <begin position="16"/>
        <end position="41"/>
    </location>
</feature>
<feature type="disulfide bond" evidence="2">
    <location>
        <begin position="25"/>
        <end position="46"/>
    </location>
</feature>
<feature type="disulfide bond" evidence="2">
    <location>
        <begin position="29"/>
        <end position="48"/>
    </location>
</feature>
<comment type="function">
    <text evidence="1 3">Beta toxins bind voltage-independently at site-4 of sodium channels (Nav) and reduces peak current and shifts the voltage of activation toward more negative potentials thereby affecting sodium channel activation and promoting spontaneous and repetitive firing (By similarity). This toxin is slightly toxic to mice (PubMed:39057941).</text>
</comment>
<comment type="activity regulation">
    <text evidence="3">Is susceptible to be slightly neutralized by human antibodies scFvs 10FG2.</text>
</comment>
<comment type="subcellular location">
    <subcellularLocation>
        <location evidence="3">Secreted</location>
    </subcellularLocation>
</comment>
<comment type="tissue specificity">
    <text evidence="6">Expressed by the venom gland.</text>
</comment>
<comment type="domain">
    <text evidence="5">Has the structural arrangement of an alpha-helix connected to antiparallel beta-sheets by disulfide bonds (CS-alpha/beta).</text>
</comment>
<comment type="mass spectrometry"/>
<comment type="similarity">
    <text evidence="5">Belongs to the long (4 C-C) scorpion toxin superfamily. Sodium channel inhibitor family. Beta subfamily.</text>
</comment>
<reference key="1">
    <citation type="journal article" date="2024" name="Toxins">
        <title>Toxic peptides from the Mexican scorpion Centruroides villegasi: chemical structure and evaluation of recognition by human single-chain antibodies.</title>
        <authorList>
            <person name="Riano-Umbarila L."/>
            <person name="Olamendi-Portugal T."/>
            <person name="Romero-Moreno J.A."/>
            <person name="Delgado-Prudencio G."/>
            <person name="Zamudio F.Z."/>
            <person name="Becerril B."/>
            <person name="Possani L.D."/>
        </authorList>
    </citation>
    <scope>PROTEIN SEQUENCE</scope>
    <scope>SUBCELLULAR LOCATION</scope>
    <scope>FUNCTION</scope>
    <scope>BIOASSAY</scope>
    <scope>MASS SPECTROMETRY</scope>
    <scope>ACTIVITY REGULATION</scope>
    <source>
        <tissue>Venom</tissue>
    </source>
</reference>
<dbReference type="GO" id="GO:0005576">
    <property type="term" value="C:extracellular region"/>
    <property type="evidence" value="ECO:0007669"/>
    <property type="project" value="UniProtKB-SubCell"/>
</dbReference>
<dbReference type="GO" id="GO:0019871">
    <property type="term" value="F:sodium channel inhibitor activity"/>
    <property type="evidence" value="ECO:0007669"/>
    <property type="project" value="InterPro"/>
</dbReference>
<dbReference type="GO" id="GO:0090729">
    <property type="term" value="F:toxin activity"/>
    <property type="evidence" value="ECO:0007669"/>
    <property type="project" value="UniProtKB-KW"/>
</dbReference>
<dbReference type="GO" id="GO:0006952">
    <property type="term" value="P:defense response"/>
    <property type="evidence" value="ECO:0007669"/>
    <property type="project" value="InterPro"/>
</dbReference>
<dbReference type="CDD" id="cd23106">
    <property type="entry name" value="neurotoxins_LC_scorpion"/>
    <property type="match status" value="1"/>
</dbReference>
<dbReference type="FunFam" id="3.30.30.10:FF:000002">
    <property type="entry name" value="Alpha-like toxin BmK-M1"/>
    <property type="match status" value="1"/>
</dbReference>
<dbReference type="Gene3D" id="3.30.30.10">
    <property type="entry name" value="Knottin, scorpion toxin-like"/>
    <property type="match status" value="1"/>
</dbReference>
<dbReference type="InterPro" id="IPR044062">
    <property type="entry name" value="LCN-type_CS_alpha_beta_dom"/>
</dbReference>
<dbReference type="InterPro" id="IPR003614">
    <property type="entry name" value="Scorpion_toxin-like"/>
</dbReference>
<dbReference type="InterPro" id="IPR036574">
    <property type="entry name" value="Scorpion_toxin-like_sf"/>
</dbReference>
<dbReference type="InterPro" id="IPR018218">
    <property type="entry name" value="Scorpion_toxinL"/>
</dbReference>
<dbReference type="PRINTS" id="PR00285">
    <property type="entry name" value="SCORPNTOXIN"/>
</dbReference>
<dbReference type="SMART" id="SM00505">
    <property type="entry name" value="Knot1"/>
    <property type="match status" value="1"/>
</dbReference>
<dbReference type="SUPFAM" id="SSF57095">
    <property type="entry name" value="Scorpion toxin-like"/>
    <property type="match status" value="1"/>
</dbReference>
<dbReference type="PROSITE" id="PS51863">
    <property type="entry name" value="LCN_CSAB"/>
    <property type="match status" value="1"/>
</dbReference>
<proteinExistence type="evidence at protein level"/>
<name>SCX2_CENVL</name>
<protein>
    <recommendedName>
        <fullName evidence="4 5">Beta-mammal toxin Cv2</fullName>
    </recommendedName>
</protein>
<keyword id="KW-0903">Direct protein sequencing</keyword>
<keyword id="KW-1015">Disulfide bond</keyword>
<keyword id="KW-0872">Ion channel impairing toxin</keyword>
<keyword id="KW-0528">Neurotoxin</keyword>
<keyword id="KW-0964">Secreted</keyword>
<keyword id="KW-0800">Toxin</keyword>
<keyword id="KW-0738">Voltage-gated sodium channel impairing toxin</keyword>
<sequence>KEGYIVNHSTGCKYECYKLGDNDYCLRECKLQYGKGAGGYCYAFGCWCTHLYEQAVVWPLPKKTCN</sequence>